<reference evidence="5" key="1">
    <citation type="journal article" date="2012" name="Syst. Biol.">
        <title>Peptidomics-based phylogeny and biogeography of Mantophasmatodea (Hexapoda).</title>
        <authorList>
            <person name="Predel R."/>
            <person name="Neupert S."/>
            <person name="Huetteroth W."/>
            <person name="Kahnt J."/>
            <person name="Waidelich D."/>
            <person name="Roth S."/>
        </authorList>
    </citation>
    <scope>PROTEIN SEQUENCE</scope>
    <scope>PYROGLUTAMATE FORMATION AT GLN-1</scope>
    <scope>AMIDATION AT ASN-11</scope>
    <source>
        <tissue evidence="3">Corpora cardiaca</tissue>
    </source>
</reference>
<sequence>QTFQYSRGWTN</sequence>
<keyword id="KW-0027">Amidation</keyword>
<keyword id="KW-0903">Direct protein sequencing</keyword>
<keyword id="KW-0527">Neuropeptide</keyword>
<keyword id="KW-0873">Pyrrolidone carboxylic acid</keyword>
<keyword id="KW-0964">Secreted</keyword>
<evidence type="ECO:0000250" key="1">
    <source>
        <dbReference type="UniProtKB" id="Q26377"/>
    </source>
</evidence>
<evidence type="ECO:0000255" key="2"/>
<evidence type="ECO:0000269" key="3">
    <source>
    </source>
</evidence>
<evidence type="ECO:0000303" key="4">
    <source>
    </source>
</evidence>
<evidence type="ECO:0000305" key="5"/>
<evidence type="ECO:0000305" key="6">
    <source>
    </source>
</evidence>
<feature type="peptide" id="PRO_0000421708" description="Corazonin" evidence="3">
    <location>
        <begin position="1"/>
        <end position="11"/>
    </location>
</feature>
<feature type="modified residue" description="Pyrrolidone carboxylic acid" evidence="3">
    <location>
        <position position="1"/>
    </location>
</feature>
<feature type="modified residue" description="Asparagine amide" evidence="3">
    <location>
        <position position="11"/>
    </location>
</feature>
<proteinExistence type="evidence at protein level"/>
<comment type="function">
    <text evidence="1">Cardioactive peptide. Corazonin is probably involved in the physiological regulation of the heart beat (By similarity).</text>
</comment>
<comment type="subcellular location">
    <subcellularLocation>
        <location evidence="6">Secreted</location>
    </subcellularLocation>
</comment>
<comment type="similarity">
    <text evidence="2">Belongs to the corazonin family.</text>
</comment>
<dbReference type="GO" id="GO:0005576">
    <property type="term" value="C:extracellular region"/>
    <property type="evidence" value="ECO:0007669"/>
    <property type="project" value="UniProtKB-SubCell"/>
</dbReference>
<dbReference type="GO" id="GO:0007218">
    <property type="term" value="P:neuropeptide signaling pathway"/>
    <property type="evidence" value="ECO:0007669"/>
    <property type="project" value="UniProtKB-KW"/>
</dbReference>
<name>CORZ_PRAMA</name>
<accession>B3A0H2</accession>
<protein>
    <recommendedName>
        <fullName evidence="4">Corazonin</fullName>
    </recommendedName>
</protein>
<organism>
    <name type="scientific">Praedatophasma maraisi</name>
    <name type="common">Gladiator</name>
    <name type="synonym">Heel-walker</name>
    <dbReference type="NCBI Taxonomy" id="409170"/>
    <lineage>
        <taxon>Eukaryota</taxon>
        <taxon>Metazoa</taxon>
        <taxon>Ecdysozoa</taxon>
        <taxon>Arthropoda</taxon>
        <taxon>Hexapoda</taxon>
        <taxon>Insecta</taxon>
        <taxon>Pterygota</taxon>
        <taxon>Neoptera</taxon>
        <taxon>Polyneoptera</taxon>
        <taxon>Mantophasmatodea</taxon>
        <taxon>Mantophasmatidae</taxon>
        <taxon>Praedatophasma</taxon>
    </lineage>
</organism>